<name>RPOZ_WOLWR</name>
<evidence type="ECO:0000255" key="1">
    <source>
        <dbReference type="HAMAP-Rule" id="MF_00366"/>
    </source>
</evidence>
<evidence type="ECO:0000256" key="2">
    <source>
        <dbReference type="SAM" id="MobiDB-lite"/>
    </source>
</evidence>
<gene>
    <name evidence="1" type="primary">rpoZ</name>
    <name type="ordered locus">WRi_013320</name>
</gene>
<organism>
    <name type="scientific">Wolbachia sp. subsp. Drosophila simulans (strain wRi)</name>
    <dbReference type="NCBI Taxonomy" id="66084"/>
    <lineage>
        <taxon>Bacteria</taxon>
        <taxon>Pseudomonadati</taxon>
        <taxon>Pseudomonadota</taxon>
        <taxon>Alphaproteobacteria</taxon>
        <taxon>Rickettsiales</taxon>
        <taxon>Anaplasmataceae</taxon>
        <taxon>Wolbachieae</taxon>
        <taxon>Wolbachia</taxon>
    </lineage>
</organism>
<keyword id="KW-0240">DNA-directed RNA polymerase</keyword>
<keyword id="KW-0548">Nucleotidyltransferase</keyword>
<keyword id="KW-0804">Transcription</keyword>
<keyword id="KW-0808">Transferase</keyword>
<comment type="function">
    <text evidence="1">Promotes RNA polymerase assembly. Latches the N- and C-terminal regions of the beta' subunit thereby facilitating its interaction with the beta and alpha subunits.</text>
</comment>
<comment type="catalytic activity">
    <reaction evidence="1">
        <text>RNA(n) + a ribonucleoside 5'-triphosphate = RNA(n+1) + diphosphate</text>
        <dbReference type="Rhea" id="RHEA:21248"/>
        <dbReference type="Rhea" id="RHEA-COMP:14527"/>
        <dbReference type="Rhea" id="RHEA-COMP:17342"/>
        <dbReference type="ChEBI" id="CHEBI:33019"/>
        <dbReference type="ChEBI" id="CHEBI:61557"/>
        <dbReference type="ChEBI" id="CHEBI:140395"/>
        <dbReference type="EC" id="2.7.7.6"/>
    </reaction>
</comment>
<comment type="subunit">
    <text evidence="1">The RNAP catalytic core consists of 2 alpha, 1 beta, 1 beta' and 1 omega subunit. When a sigma factor is associated with the core the holoenzyme is formed, which can initiate transcription.</text>
</comment>
<comment type="similarity">
    <text evidence="1">Belongs to the RNA polymerase subunit omega family.</text>
</comment>
<feature type="chain" id="PRO_1000133762" description="DNA-directed RNA polymerase subunit omega">
    <location>
        <begin position="1"/>
        <end position="135"/>
    </location>
</feature>
<feature type="region of interest" description="Disordered" evidence="2">
    <location>
        <begin position="107"/>
        <end position="135"/>
    </location>
</feature>
<feature type="compositionally biased region" description="Acidic residues" evidence="2">
    <location>
        <begin position="112"/>
        <end position="135"/>
    </location>
</feature>
<accession>C0R512</accession>
<dbReference type="EC" id="2.7.7.6" evidence="1"/>
<dbReference type="EMBL" id="CP001391">
    <property type="protein sequence ID" value="ACN96004.1"/>
    <property type="molecule type" value="Genomic_DNA"/>
</dbReference>
<dbReference type="RefSeq" id="WP_007548528.1">
    <property type="nucleotide sequence ID" value="NZ_MKIF01000114.1"/>
</dbReference>
<dbReference type="SMR" id="C0R512"/>
<dbReference type="STRING" id="66084.WRi_013320"/>
<dbReference type="GeneID" id="70036767"/>
<dbReference type="KEGG" id="wri:WRi_013320"/>
<dbReference type="HOGENOM" id="CLU_1937277_0_0_5"/>
<dbReference type="Proteomes" id="UP000001293">
    <property type="component" value="Chromosome"/>
</dbReference>
<dbReference type="GO" id="GO:0000428">
    <property type="term" value="C:DNA-directed RNA polymerase complex"/>
    <property type="evidence" value="ECO:0007669"/>
    <property type="project" value="UniProtKB-KW"/>
</dbReference>
<dbReference type="GO" id="GO:0003677">
    <property type="term" value="F:DNA binding"/>
    <property type="evidence" value="ECO:0007669"/>
    <property type="project" value="UniProtKB-UniRule"/>
</dbReference>
<dbReference type="GO" id="GO:0003899">
    <property type="term" value="F:DNA-directed RNA polymerase activity"/>
    <property type="evidence" value="ECO:0007669"/>
    <property type="project" value="UniProtKB-UniRule"/>
</dbReference>
<dbReference type="GO" id="GO:0006351">
    <property type="term" value="P:DNA-templated transcription"/>
    <property type="evidence" value="ECO:0007669"/>
    <property type="project" value="UniProtKB-UniRule"/>
</dbReference>
<dbReference type="Gene3D" id="3.90.940.10">
    <property type="match status" value="1"/>
</dbReference>
<dbReference type="HAMAP" id="MF_00366">
    <property type="entry name" value="RNApol_bact_RpoZ"/>
    <property type="match status" value="1"/>
</dbReference>
<dbReference type="InterPro" id="IPR003716">
    <property type="entry name" value="DNA-dir_RNA_pol_omega"/>
</dbReference>
<dbReference type="InterPro" id="IPR006110">
    <property type="entry name" value="Pol_omega/Rpo6/RPB6"/>
</dbReference>
<dbReference type="InterPro" id="IPR036161">
    <property type="entry name" value="RPB6/omega-like_sf"/>
</dbReference>
<dbReference type="NCBIfam" id="TIGR00690">
    <property type="entry name" value="rpoZ"/>
    <property type="match status" value="1"/>
</dbReference>
<dbReference type="PANTHER" id="PTHR34476">
    <property type="entry name" value="DNA-DIRECTED RNA POLYMERASE SUBUNIT OMEGA"/>
    <property type="match status" value="1"/>
</dbReference>
<dbReference type="PANTHER" id="PTHR34476:SF1">
    <property type="entry name" value="DNA-DIRECTED RNA POLYMERASE SUBUNIT OMEGA"/>
    <property type="match status" value="1"/>
</dbReference>
<dbReference type="Pfam" id="PF01192">
    <property type="entry name" value="RNA_pol_Rpb6"/>
    <property type="match status" value="1"/>
</dbReference>
<dbReference type="SMART" id="SM01409">
    <property type="entry name" value="RNA_pol_Rpb6"/>
    <property type="match status" value="1"/>
</dbReference>
<dbReference type="SUPFAM" id="SSF63562">
    <property type="entry name" value="RPB6/omega subunit-like"/>
    <property type="match status" value="1"/>
</dbReference>
<sequence>MAESIVEKCIERVSNRFKLVLLASQRTHDLNTGASNPIQAAKFKGHKNTIVSLHEIAGKQVDTHELFSLLVGRCKEYMKGNMNNVYSSNTSKLANLLNFSDNTDLDASQESQDYEVDGEIDDEINDQDGDEEVSV</sequence>
<reference key="1">
    <citation type="journal article" date="2009" name="Proc. Natl. Acad. Sci. U.S.A.">
        <title>The mosaic genome structure of the Wolbachia wRi strain infecting Drosophila simulans.</title>
        <authorList>
            <person name="Klasson L."/>
            <person name="Westberg J."/>
            <person name="Sapountzis P."/>
            <person name="Naeslund K."/>
            <person name="Lutnaes Y."/>
            <person name="Darby A.C."/>
            <person name="Veneti Z."/>
            <person name="Chen L."/>
            <person name="Braig H.R."/>
            <person name="Garrett R."/>
            <person name="Bourtzis K."/>
            <person name="Andersson S.G."/>
        </authorList>
    </citation>
    <scope>NUCLEOTIDE SEQUENCE [LARGE SCALE GENOMIC DNA]</scope>
    <source>
        <strain>wRi</strain>
    </source>
</reference>
<protein>
    <recommendedName>
        <fullName evidence="1">DNA-directed RNA polymerase subunit omega</fullName>
        <shortName evidence="1">RNAP omega subunit</shortName>
        <ecNumber evidence="1">2.7.7.6</ecNumber>
    </recommendedName>
    <alternativeName>
        <fullName evidence="1">RNA polymerase omega subunit</fullName>
    </alternativeName>
    <alternativeName>
        <fullName evidence="1">Transcriptase subunit omega</fullName>
    </alternativeName>
</protein>
<proteinExistence type="inferred from homology"/>